<keyword id="KW-0067">ATP-binding</keyword>
<keyword id="KW-0131">Cell cycle</keyword>
<keyword id="KW-0132">Cell division</keyword>
<keyword id="KW-0997">Cell inner membrane</keyword>
<keyword id="KW-1003">Cell membrane</keyword>
<keyword id="KW-0159">Chromosome partition</keyword>
<keyword id="KW-0238">DNA-binding</keyword>
<keyword id="KW-0472">Membrane</keyword>
<keyword id="KW-0547">Nucleotide-binding</keyword>
<keyword id="KW-1185">Reference proteome</keyword>
<keyword id="KW-0812">Transmembrane</keyword>
<keyword id="KW-1133">Transmembrane helix</keyword>
<feature type="chain" id="PRO_0000098262" description="DNA translocase FtsK">
    <location>
        <begin position="1"/>
        <end position="858"/>
    </location>
</feature>
<feature type="transmembrane region" description="Helical" evidence="2">
    <location>
        <begin position="9"/>
        <end position="29"/>
    </location>
</feature>
<feature type="transmembrane region" description="Helical" evidence="2">
    <location>
        <begin position="48"/>
        <end position="68"/>
    </location>
</feature>
<feature type="transmembrane region" description="Helical" evidence="2">
    <location>
        <begin position="74"/>
        <end position="94"/>
    </location>
</feature>
<feature type="transmembrane region" description="Helical" evidence="2">
    <location>
        <begin position="116"/>
        <end position="136"/>
    </location>
</feature>
<feature type="topological domain" description="Cytoplasmic" evidence="2">
    <location>
        <begin position="137"/>
        <end position="858"/>
    </location>
</feature>
<feature type="domain" description="FtsK" evidence="3">
    <location>
        <begin position="532"/>
        <end position="722"/>
    </location>
</feature>
<feature type="region of interest" description="Disordered" evidence="4">
    <location>
        <begin position="175"/>
        <end position="218"/>
    </location>
</feature>
<feature type="region of interest" description="Disordered" evidence="4">
    <location>
        <begin position="236"/>
        <end position="330"/>
    </location>
</feature>
<feature type="compositionally biased region" description="Basic and acidic residues" evidence="4">
    <location>
        <begin position="186"/>
        <end position="213"/>
    </location>
</feature>
<feature type="compositionally biased region" description="Basic and acidic residues" evidence="4">
    <location>
        <begin position="269"/>
        <end position="282"/>
    </location>
</feature>
<feature type="binding site" evidence="3">
    <location>
        <begin position="552"/>
        <end position="557"/>
    </location>
    <ligand>
        <name>ATP</name>
        <dbReference type="ChEBI" id="CHEBI:30616"/>
    </ligand>
</feature>
<comment type="function">
    <text evidence="1">Essential cell division protein that coordinates cell division and chromosome segregation. The N-terminus is involved in assembly of the cell-division machinery. The C-terminus functions as a DNA motor that moves dsDNA in an ATP-dependent manner towards the dif recombination site, which is located within the replication terminus region. Translocation stops specifically at Xer-dif sites, where FtsK interacts with the Xer recombinase, allowing activation of chromosome unlinking by recombination. FtsK orienting polar sequences (KOPS) guide the direction of DNA translocation. FtsK can remove proteins from DNA as it translocates, but translocation stops specifically at XerCD-dif site, thereby preventing removal of XerC and XerD from dif (By similarity).</text>
</comment>
<comment type="subunit">
    <text evidence="1">Homohexamer. Forms a ring that surrounds DNA (By similarity).</text>
</comment>
<comment type="subcellular location">
    <subcellularLocation>
        <location evidence="1">Cell inner membrane</location>
        <topology evidence="1">Multi-pass membrane protein</topology>
    </subcellularLocation>
    <text evidence="1">Located at the septum.</text>
</comment>
<comment type="domain">
    <text evidence="1">Consists of an N-terminal domain, which is sufficient for the localization to the septal ring and is required for cell division, followed by a linker domain, and a C-terminal domain, which forms the translocation motor involved in chromosome segregation. The C-terminal domain can be further subdivided into alpha, beta and gamma subdomains. The alpha and beta subdomains multimerise to produce a hexameric ring, contain the nucleotide binding motif and form the DNA pump. The gamma subdomain is a regulatory subdomain that controls translocation of DNA by recognition of KOPS motifs and interacts with XerD recombinase (By similarity).</text>
</comment>
<comment type="similarity">
    <text evidence="5">Belongs to the FtsK/SpoIIIE/SftA family.</text>
</comment>
<gene>
    <name type="primary">ftsK</name>
    <name type="ordered locus">HP_1090</name>
</gene>
<evidence type="ECO:0000250" key="1"/>
<evidence type="ECO:0000255" key="2"/>
<evidence type="ECO:0000255" key="3">
    <source>
        <dbReference type="PROSITE-ProRule" id="PRU00289"/>
    </source>
</evidence>
<evidence type="ECO:0000256" key="4">
    <source>
        <dbReference type="SAM" id="MobiDB-lite"/>
    </source>
</evidence>
<evidence type="ECO:0000305" key="5"/>
<sequence length="858" mass="96445">MQPMKSKKLYLALIIGVLLAFLTLSSWLGNSGLVGRFGVWFAALNKKYFGHLSFINLPYLAWVLFLLYKTKNPFTEIVLEKTLGHLLGILSLLFLQSSLLNQGEIGNSARLFLRPFIGDFGLYALITLMVVISYLILFKLPPKSVFYPYMNKTQNLLKEIYKQCLQAFSPNFSPKKEGFENTPSDIQKKETKNDKEKENRKENPINENHKTPNEEPFLAIPTPYNTTLNDSEPQEGLVQISSHPPTHYTIYPKRNRFDDLTNPTNPPLKEIKQETKEREPTPTKETLTPTTPKPIMPTLAPIIENDNKTENQKTPNHPKKEENPQENTQEEMIEGRIEEMIKENLKKEEKEVQNAPNFSPVTPTSAKKPVMVKELSENKEILDGLDYGEVQKPKDYELPTTQLLNAVCLKDTSLDENEIDQKIQDLLSKLRTFKIDGDIIRTYSGPIVTTFEFRPAPNVKVSRILGLSDDLAMTLCAESIRIQAPIKGKDVVGIEIPNSQSQIIYLREILESELFQKSSSPLTLALGKDIVGNPFITDLKKLPHLLIAGTTGSGKSVGVNAMILSLLYKNPPDQLKLVMIDPKMVEFSIYADIPHLLTPIITDPKKAIGALQSVAKEMERRYSLMSEYKVKTIDSYNEQAPSNGVEAFPYLIVVIDELADLMMTGGKEAEFPIARIAQMGRASGLHLIVATQRPSVDVVTGLIKTNLPSRVSFRVGTKIDSKVILDTDGAQSLLGRGDMLFTPPGANGLVRLHAPFATEDEIKKIVDFIKAQKEVQYDKDFLLEESRMPLDTPNYQGDDILERAKAVILEKKITSTSFLQRQLKIGYNQAATITDELEAQGFLSPRNAKGNREILQNF</sequence>
<name>FTSK_HELPY</name>
<reference key="1">
    <citation type="journal article" date="1997" name="Nature">
        <title>The complete genome sequence of the gastric pathogen Helicobacter pylori.</title>
        <authorList>
            <person name="Tomb J.-F."/>
            <person name="White O."/>
            <person name="Kerlavage A.R."/>
            <person name="Clayton R.A."/>
            <person name="Sutton G.G."/>
            <person name="Fleischmann R.D."/>
            <person name="Ketchum K.A."/>
            <person name="Klenk H.-P."/>
            <person name="Gill S.R."/>
            <person name="Dougherty B.A."/>
            <person name="Nelson K.E."/>
            <person name="Quackenbush J."/>
            <person name="Zhou L."/>
            <person name="Kirkness E.F."/>
            <person name="Peterson S.N."/>
            <person name="Loftus B.J."/>
            <person name="Richardson D.L."/>
            <person name="Dodson R.J."/>
            <person name="Khalak H.G."/>
            <person name="Glodek A."/>
            <person name="McKenney K."/>
            <person name="FitzGerald L.M."/>
            <person name="Lee N."/>
            <person name="Adams M.D."/>
            <person name="Hickey E.K."/>
            <person name="Berg D.E."/>
            <person name="Gocayne J.D."/>
            <person name="Utterback T.R."/>
            <person name="Peterson J.D."/>
            <person name="Kelley J.M."/>
            <person name="Cotton M.D."/>
            <person name="Weidman J.F."/>
            <person name="Fujii C."/>
            <person name="Bowman C."/>
            <person name="Watthey L."/>
            <person name="Wallin E."/>
            <person name="Hayes W.S."/>
            <person name="Borodovsky M."/>
            <person name="Karp P.D."/>
            <person name="Smith H.O."/>
            <person name="Fraser C.M."/>
            <person name="Venter J.C."/>
        </authorList>
    </citation>
    <scope>NUCLEOTIDE SEQUENCE [LARGE SCALE GENOMIC DNA]</scope>
    <source>
        <strain>ATCC 700392 / 26695</strain>
    </source>
</reference>
<organism>
    <name type="scientific">Helicobacter pylori (strain ATCC 700392 / 26695)</name>
    <name type="common">Campylobacter pylori</name>
    <dbReference type="NCBI Taxonomy" id="85962"/>
    <lineage>
        <taxon>Bacteria</taxon>
        <taxon>Pseudomonadati</taxon>
        <taxon>Campylobacterota</taxon>
        <taxon>Epsilonproteobacteria</taxon>
        <taxon>Campylobacterales</taxon>
        <taxon>Helicobacteraceae</taxon>
        <taxon>Helicobacter</taxon>
    </lineage>
</organism>
<accession>O25722</accession>
<dbReference type="EMBL" id="AE000511">
    <property type="protein sequence ID" value="AAD08132.1"/>
    <property type="molecule type" value="Genomic_DNA"/>
</dbReference>
<dbReference type="PIR" id="B64656">
    <property type="entry name" value="B64656"/>
</dbReference>
<dbReference type="RefSeq" id="NP_207881.1">
    <property type="nucleotide sequence ID" value="NC_000915.1"/>
</dbReference>
<dbReference type="SMR" id="O25722"/>
<dbReference type="STRING" id="85962.HP_1090"/>
<dbReference type="PaxDb" id="85962-C694_05630"/>
<dbReference type="EnsemblBacteria" id="AAD08132">
    <property type="protein sequence ID" value="AAD08132"/>
    <property type="gene ID" value="HP_1090"/>
</dbReference>
<dbReference type="KEGG" id="hpy:HP_1090"/>
<dbReference type="PATRIC" id="fig|85962.8.peg.1139"/>
<dbReference type="eggNOG" id="COG1674">
    <property type="taxonomic scope" value="Bacteria"/>
</dbReference>
<dbReference type="InParanoid" id="O25722"/>
<dbReference type="OrthoDB" id="9807790at2"/>
<dbReference type="PhylomeDB" id="O25722"/>
<dbReference type="Proteomes" id="UP000000429">
    <property type="component" value="Chromosome"/>
</dbReference>
<dbReference type="GO" id="GO:0005886">
    <property type="term" value="C:plasma membrane"/>
    <property type="evidence" value="ECO:0007669"/>
    <property type="project" value="UniProtKB-SubCell"/>
</dbReference>
<dbReference type="GO" id="GO:0005524">
    <property type="term" value="F:ATP binding"/>
    <property type="evidence" value="ECO:0007669"/>
    <property type="project" value="UniProtKB-KW"/>
</dbReference>
<dbReference type="GO" id="GO:0003677">
    <property type="term" value="F:DNA binding"/>
    <property type="evidence" value="ECO:0007669"/>
    <property type="project" value="UniProtKB-KW"/>
</dbReference>
<dbReference type="GO" id="GO:0015616">
    <property type="term" value="F:DNA translocase activity"/>
    <property type="evidence" value="ECO:0000318"/>
    <property type="project" value="GO_Central"/>
</dbReference>
<dbReference type="GO" id="GO:0051301">
    <property type="term" value="P:cell division"/>
    <property type="evidence" value="ECO:0007669"/>
    <property type="project" value="UniProtKB-KW"/>
</dbReference>
<dbReference type="GO" id="GO:0007059">
    <property type="term" value="P:chromosome segregation"/>
    <property type="evidence" value="ECO:0007669"/>
    <property type="project" value="UniProtKB-KW"/>
</dbReference>
<dbReference type="CDD" id="cd01127">
    <property type="entry name" value="TrwB_TraG_TraD_VirD4"/>
    <property type="match status" value="1"/>
</dbReference>
<dbReference type="Gene3D" id="3.30.980.40">
    <property type="match status" value="1"/>
</dbReference>
<dbReference type="Gene3D" id="3.40.50.300">
    <property type="entry name" value="P-loop containing nucleotide triphosphate hydrolases"/>
    <property type="match status" value="1"/>
</dbReference>
<dbReference type="Gene3D" id="1.10.10.10">
    <property type="entry name" value="Winged helix-like DNA-binding domain superfamily/Winged helix DNA-binding domain"/>
    <property type="match status" value="1"/>
</dbReference>
<dbReference type="InterPro" id="IPR050206">
    <property type="entry name" value="FtsK/SpoIIIE/SftA"/>
</dbReference>
<dbReference type="InterPro" id="IPR041027">
    <property type="entry name" value="FtsK_alpha"/>
</dbReference>
<dbReference type="InterPro" id="IPR002543">
    <property type="entry name" value="FtsK_dom"/>
</dbReference>
<dbReference type="InterPro" id="IPR018541">
    <property type="entry name" value="Ftsk_gamma"/>
</dbReference>
<dbReference type="InterPro" id="IPR027417">
    <property type="entry name" value="P-loop_NTPase"/>
</dbReference>
<dbReference type="InterPro" id="IPR036388">
    <property type="entry name" value="WH-like_DNA-bd_sf"/>
</dbReference>
<dbReference type="InterPro" id="IPR036390">
    <property type="entry name" value="WH_DNA-bd_sf"/>
</dbReference>
<dbReference type="PANTHER" id="PTHR22683:SF41">
    <property type="entry name" value="DNA TRANSLOCASE FTSK"/>
    <property type="match status" value="1"/>
</dbReference>
<dbReference type="PANTHER" id="PTHR22683">
    <property type="entry name" value="SPORULATION PROTEIN RELATED"/>
    <property type="match status" value="1"/>
</dbReference>
<dbReference type="Pfam" id="PF17854">
    <property type="entry name" value="FtsK_alpha"/>
    <property type="match status" value="1"/>
</dbReference>
<dbReference type="Pfam" id="PF09397">
    <property type="entry name" value="FtsK_gamma"/>
    <property type="match status" value="1"/>
</dbReference>
<dbReference type="Pfam" id="PF01580">
    <property type="entry name" value="FtsK_SpoIIIE"/>
    <property type="match status" value="1"/>
</dbReference>
<dbReference type="SMART" id="SM00843">
    <property type="entry name" value="Ftsk_gamma"/>
    <property type="match status" value="1"/>
</dbReference>
<dbReference type="SUPFAM" id="SSF52540">
    <property type="entry name" value="P-loop containing nucleoside triphosphate hydrolases"/>
    <property type="match status" value="1"/>
</dbReference>
<dbReference type="SUPFAM" id="SSF46785">
    <property type="entry name" value="Winged helix' DNA-binding domain"/>
    <property type="match status" value="1"/>
</dbReference>
<dbReference type="PROSITE" id="PS50901">
    <property type="entry name" value="FTSK"/>
    <property type="match status" value="1"/>
</dbReference>
<protein>
    <recommendedName>
        <fullName>DNA translocase FtsK</fullName>
    </recommendedName>
</protein>
<proteinExistence type="inferred from homology"/>